<comment type="function">
    <text evidence="1">Specifically methylates the N4 position of cytidine in position 1402 (C1402) of 16S rRNA.</text>
</comment>
<comment type="catalytic activity">
    <reaction evidence="1">
        <text>cytidine(1402) in 16S rRNA + S-adenosyl-L-methionine = N(4)-methylcytidine(1402) in 16S rRNA + S-adenosyl-L-homocysteine + H(+)</text>
        <dbReference type="Rhea" id="RHEA:42928"/>
        <dbReference type="Rhea" id="RHEA-COMP:10286"/>
        <dbReference type="Rhea" id="RHEA-COMP:10287"/>
        <dbReference type="ChEBI" id="CHEBI:15378"/>
        <dbReference type="ChEBI" id="CHEBI:57856"/>
        <dbReference type="ChEBI" id="CHEBI:59789"/>
        <dbReference type="ChEBI" id="CHEBI:74506"/>
        <dbReference type="ChEBI" id="CHEBI:82748"/>
        <dbReference type="EC" id="2.1.1.199"/>
    </reaction>
</comment>
<comment type="subcellular location">
    <subcellularLocation>
        <location evidence="1">Cytoplasm</location>
    </subcellularLocation>
</comment>
<comment type="similarity">
    <text evidence="1">Belongs to the methyltransferase superfamily. RsmH family.</text>
</comment>
<proteinExistence type="inferred from homology"/>
<accession>A1WRK3</accession>
<evidence type="ECO:0000255" key="1">
    <source>
        <dbReference type="HAMAP-Rule" id="MF_01007"/>
    </source>
</evidence>
<evidence type="ECO:0000256" key="2">
    <source>
        <dbReference type="SAM" id="MobiDB-lite"/>
    </source>
</evidence>
<keyword id="KW-0963">Cytoplasm</keyword>
<keyword id="KW-0489">Methyltransferase</keyword>
<keyword id="KW-1185">Reference proteome</keyword>
<keyword id="KW-0698">rRNA processing</keyword>
<keyword id="KW-0949">S-adenosyl-L-methionine</keyword>
<keyword id="KW-0808">Transferase</keyword>
<protein>
    <recommendedName>
        <fullName evidence="1">Ribosomal RNA small subunit methyltransferase H</fullName>
        <ecNumber evidence="1">2.1.1.199</ecNumber>
    </recommendedName>
    <alternativeName>
        <fullName evidence="1">16S rRNA m(4)C1402 methyltransferase</fullName>
    </alternativeName>
    <alternativeName>
        <fullName evidence="1">rRNA (cytosine-N(4)-)-methyltransferase RsmH</fullName>
    </alternativeName>
</protein>
<feature type="chain" id="PRO_0000387206" description="Ribosomal RNA small subunit methyltransferase H">
    <location>
        <begin position="1"/>
        <end position="334"/>
    </location>
</feature>
<feature type="region of interest" description="Disordered" evidence="2">
    <location>
        <begin position="303"/>
        <end position="334"/>
    </location>
</feature>
<feature type="binding site" evidence="1">
    <location>
        <begin position="39"/>
        <end position="41"/>
    </location>
    <ligand>
        <name>S-adenosyl-L-methionine</name>
        <dbReference type="ChEBI" id="CHEBI:59789"/>
    </ligand>
</feature>
<feature type="binding site" evidence="1">
    <location>
        <position position="59"/>
    </location>
    <ligand>
        <name>S-adenosyl-L-methionine</name>
        <dbReference type="ChEBI" id="CHEBI:59789"/>
    </ligand>
</feature>
<feature type="binding site" evidence="1">
    <location>
        <position position="83"/>
    </location>
    <ligand>
        <name>S-adenosyl-L-methionine</name>
        <dbReference type="ChEBI" id="CHEBI:59789"/>
    </ligand>
</feature>
<feature type="binding site" evidence="1">
    <location>
        <position position="100"/>
    </location>
    <ligand>
        <name>S-adenosyl-L-methionine</name>
        <dbReference type="ChEBI" id="CHEBI:59789"/>
    </ligand>
</feature>
<feature type="binding site" evidence="1">
    <location>
        <position position="107"/>
    </location>
    <ligand>
        <name>S-adenosyl-L-methionine</name>
        <dbReference type="ChEBI" id="CHEBI:59789"/>
    </ligand>
</feature>
<name>RSMH_VEREI</name>
<dbReference type="EC" id="2.1.1.199" evidence="1"/>
<dbReference type="EMBL" id="CP000542">
    <property type="protein sequence ID" value="ABM60260.1"/>
    <property type="molecule type" value="Genomic_DNA"/>
</dbReference>
<dbReference type="RefSeq" id="WP_011812244.1">
    <property type="nucleotide sequence ID" value="NC_008786.1"/>
</dbReference>
<dbReference type="SMR" id="A1WRK3"/>
<dbReference type="STRING" id="391735.Veis_4562"/>
<dbReference type="GeneID" id="76462855"/>
<dbReference type="KEGG" id="vei:Veis_4562"/>
<dbReference type="eggNOG" id="COG0275">
    <property type="taxonomic scope" value="Bacteria"/>
</dbReference>
<dbReference type="HOGENOM" id="CLU_038422_2_0_4"/>
<dbReference type="OrthoDB" id="9806637at2"/>
<dbReference type="Proteomes" id="UP000000374">
    <property type="component" value="Chromosome"/>
</dbReference>
<dbReference type="GO" id="GO:0005737">
    <property type="term" value="C:cytoplasm"/>
    <property type="evidence" value="ECO:0007669"/>
    <property type="project" value="UniProtKB-SubCell"/>
</dbReference>
<dbReference type="GO" id="GO:0071424">
    <property type="term" value="F:rRNA (cytosine-N4-)-methyltransferase activity"/>
    <property type="evidence" value="ECO:0007669"/>
    <property type="project" value="UniProtKB-UniRule"/>
</dbReference>
<dbReference type="GO" id="GO:0070475">
    <property type="term" value="P:rRNA base methylation"/>
    <property type="evidence" value="ECO:0007669"/>
    <property type="project" value="UniProtKB-UniRule"/>
</dbReference>
<dbReference type="Gene3D" id="1.10.150.170">
    <property type="entry name" value="Putative methyltransferase TM0872, insert domain"/>
    <property type="match status" value="1"/>
</dbReference>
<dbReference type="Gene3D" id="3.40.50.150">
    <property type="entry name" value="Vaccinia Virus protein VP39"/>
    <property type="match status" value="1"/>
</dbReference>
<dbReference type="HAMAP" id="MF_01007">
    <property type="entry name" value="16SrRNA_methyltr_H"/>
    <property type="match status" value="1"/>
</dbReference>
<dbReference type="InterPro" id="IPR002903">
    <property type="entry name" value="RsmH"/>
</dbReference>
<dbReference type="InterPro" id="IPR023397">
    <property type="entry name" value="SAM-dep_MeTrfase_MraW_recog"/>
</dbReference>
<dbReference type="InterPro" id="IPR029063">
    <property type="entry name" value="SAM-dependent_MTases_sf"/>
</dbReference>
<dbReference type="NCBIfam" id="TIGR00006">
    <property type="entry name" value="16S rRNA (cytosine(1402)-N(4))-methyltransferase RsmH"/>
    <property type="match status" value="1"/>
</dbReference>
<dbReference type="PANTHER" id="PTHR11265:SF0">
    <property type="entry name" value="12S RRNA N4-METHYLCYTIDINE METHYLTRANSFERASE"/>
    <property type="match status" value="1"/>
</dbReference>
<dbReference type="PANTHER" id="PTHR11265">
    <property type="entry name" value="S-ADENOSYL-METHYLTRANSFERASE MRAW"/>
    <property type="match status" value="1"/>
</dbReference>
<dbReference type="Pfam" id="PF01795">
    <property type="entry name" value="Methyltransf_5"/>
    <property type="match status" value="1"/>
</dbReference>
<dbReference type="PIRSF" id="PIRSF004486">
    <property type="entry name" value="MraW"/>
    <property type="match status" value="1"/>
</dbReference>
<dbReference type="SUPFAM" id="SSF81799">
    <property type="entry name" value="Putative methyltransferase TM0872, insert domain"/>
    <property type="match status" value="1"/>
</dbReference>
<dbReference type="SUPFAM" id="SSF53335">
    <property type="entry name" value="S-adenosyl-L-methionine-dependent methyltransferases"/>
    <property type="match status" value="1"/>
</dbReference>
<organism>
    <name type="scientific">Verminephrobacter eiseniae (strain EF01-2)</name>
    <dbReference type="NCBI Taxonomy" id="391735"/>
    <lineage>
        <taxon>Bacteria</taxon>
        <taxon>Pseudomonadati</taxon>
        <taxon>Pseudomonadota</taxon>
        <taxon>Betaproteobacteria</taxon>
        <taxon>Burkholderiales</taxon>
        <taxon>Comamonadaceae</taxon>
        <taxon>Verminephrobacter</taxon>
    </lineage>
</organism>
<reference key="1">
    <citation type="submission" date="2006-12" db="EMBL/GenBank/DDBJ databases">
        <title>Complete sequence of chromosome 1 of Verminephrobacter eiseniae EF01-2.</title>
        <authorList>
            <person name="Copeland A."/>
            <person name="Lucas S."/>
            <person name="Lapidus A."/>
            <person name="Barry K."/>
            <person name="Detter J.C."/>
            <person name="Glavina del Rio T."/>
            <person name="Dalin E."/>
            <person name="Tice H."/>
            <person name="Pitluck S."/>
            <person name="Chertkov O."/>
            <person name="Brettin T."/>
            <person name="Bruce D."/>
            <person name="Han C."/>
            <person name="Tapia R."/>
            <person name="Gilna P."/>
            <person name="Schmutz J."/>
            <person name="Larimer F."/>
            <person name="Land M."/>
            <person name="Hauser L."/>
            <person name="Kyrpides N."/>
            <person name="Kim E."/>
            <person name="Stahl D."/>
            <person name="Richardson P."/>
        </authorList>
    </citation>
    <scope>NUCLEOTIDE SEQUENCE [LARGE SCALE GENOMIC DNA]</scope>
    <source>
        <strain>EF01-2</strain>
    </source>
</reference>
<gene>
    <name evidence="1" type="primary">rsmH</name>
    <name type="synonym">mraW</name>
    <name type="ordered locus">Veis_4562</name>
</gene>
<sequence>MSSAPCHTTVLREPAVDALLARAGPAPAGTWVDATFGRGGHTRLILCRLGPQGRLVAFDKDPEAIAEAMRITDARFSIRHQGFGQLGQLPAGSLAGVLMDLGVSSPQIDSPERGFSFRFDGPLDMRMDTTRGLSAADWLATADAGQIAQVLRDYGEERFAGLIAKAIVARRQARGPLARTAELADLVAGAVKTREPGQNPATRTFQALRIFINAELEELQQALAASLLVLQPGGRLVVLSFHSLEDRIVKQFIARHSRQPFDRRVPFAAPQAMQLLALARVRPDAAEVAANPRARSAIMRVAERTQAHGAERSDMRRAERPDARRAEHGEVLPP</sequence>